<proteinExistence type="inferred from homology"/>
<dbReference type="EMBL" id="AP008232">
    <property type="protein sequence ID" value="BAE74640.1"/>
    <property type="molecule type" value="Genomic_DNA"/>
</dbReference>
<dbReference type="RefSeq" id="WP_011411420.1">
    <property type="nucleotide sequence ID" value="NC_007712.1"/>
</dbReference>
<dbReference type="SMR" id="Q2NT85"/>
<dbReference type="KEGG" id="sgl:SG1365"/>
<dbReference type="eggNOG" id="COG3012">
    <property type="taxonomic scope" value="Bacteria"/>
</dbReference>
<dbReference type="HOGENOM" id="CLU_099590_0_0_6"/>
<dbReference type="OrthoDB" id="21421at2"/>
<dbReference type="Proteomes" id="UP000001932">
    <property type="component" value="Chromosome"/>
</dbReference>
<dbReference type="Gene3D" id="3.10.450.50">
    <property type="match status" value="1"/>
</dbReference>
<dbReference type="HAMAP" id="MF_00612">
    <property type="entry name" value="UPF0225"/>
    <property type="match status" value="1"/>
</dbReference>
<dbReference type="InterPro" id="IPR032710">
    <property type="entry name" value="NTF2-like_dom_sf"/>
</dbReference>
<dbReference type="InterPro" id="IPR004027">
    <property type="entry name" value="SEC_C_motif"/>
</dbReference>
<dbReference type="InterPro" id="IPR023006">
    <property type="entry name" value="UPF0225"/>
</dbReference>
<dbReference type="InterPro" id="IPR048469">
    <property type="entry name" value="YchJ-like_M"/>
</dbReference>
<dbReference type="NCBIfam" id="NF002449">
    <property type="entry name" value="PRK01617.1"/>
    <property type="match status" value="1"/>
</dbReference>
<dbReference type="NCBIfam" id="NF002486">
    <property type="entry name" value="PRK01752.1"/>
    <property type="match status" value="1"/>
</dbReference>
<dbReference type="PANTHER" id="PTHR33747:SF1">
    <property type="entry name" value="ADENYLATE CYCLASE-ASSOCIATED CAP C-TERMINAL DOMAIN-CONTAINING PROTEIN"/>
    <property type="match status" value="1"/>
</dbReference>
<dbReference type="PANTHER" id="PTHR33747">
    <property type="entry name" value="UPF0225 PROTEIN SCO1677"/>
    <property type="match status" value="1"/>
</dbReference>
<dbReference type="Pfam" id="PF02810">
    <property type="entry name" value="SEC-C"/>
    <property type="match status" value="2"/>
</dbReference>
<dbReference type="Pfam" id="PF17775">
    <property type="entry name" value="YchJ_M-like"/>
    <property type="match status" value="1"/>
</dbReference>
<dbReference type="SUPFAM" id="SSF54427">
    <property type="entry name" value="NTF2-like"/>
    <property type="match status" value="1"/>
</dbReference>
<dbReference type="SUPFAM" id="SSF103642">
    <property type="entry name" value="Sec-C motif"/>
    <property type="match status" value="1"/>
</dbReference>
<feature type="chain" id="PRO_1000056745" description="UPF0225 protein SG1365">
    <location>
        <begin position="1"/>
        <end position="154"/>
    </location>
</feature>
<name>Y1365_SODGM</name>
<accession>Q2NT85</accession>
<sequence>MRSPCPCNSGKLYADCCAPFISKDALPATPEQLMRSRYSAFVIQDGDYLIATWHPQAVAEAWRDEITAGFRTTRWRDLAVQECAAGQDSDSGYVTFLALFYDERQRRNGFIHERSRFVRLNERWYYVDGRHIVPGRNAPCPCGSGLKYKKCCEQ</sequence>
<protein>
    <recommendedName>
        <fullName evidence="1">UPF0225 protein SG1365</fullName>
    </recommendedName>
</protein>
<organism>
    <name type="scientific">Sodalis glossinidius (strain morsitans)</name>
    <dbReference type="NCBI Taxonomy" id="343509"/>
    <lineage>
        <taxon>Bacteria</taxon>
        <taxon>Pseudomonadati</taxon>
        <taxon>Pseudomonadota</taxon>
        <taxon>Gammaproteobacteria</taxon>
        <taxon>Enterobacterales</taxon>
        <taxon>Bruguierivoracaceae</taxon>
        <taxon>Sodalis</taxon>
    </lineage>
</organism>
<comment type="similarity">
    <text evidence="1">Belongs to the UPF0225 family.</text>
</comment>
<evidence type="ECO:0000255" key="1">
    <source>
        <dbReference type="HAMAP-Rule" id="MF_00612"/>
    </source>
</evidence>
<reference key="1">
    <citation type="journal article" date="2006" name="Genome Res.">
        <title>Massive genome erosion and functional adaptations provide insights into the symbiotic lifestyle of Sodalis glossinidius in the tsetse host.</title>
        <authorList>
            <person name="Toh H."/>
            <person name="Weiss B.L."/>
            <person name="Perkin S.A.H."/>
            <person name="Yamashita A."/>
            <person name="Oshima K."/>
            <person name="Hattori M."/>
            <person name="Aksoy S."/>
        </authorList>
    </citation>
    <scope>NUCLEOTIDE SEQUENCE [LARGE SCALE GENOMIC DNA]</scope>
    <source>
        <strain>morsitans</strain>
    </source>
</reference>
<gene>
    <name type="ordered locus">SG1365</name>
</gene>